<gene>
    <name evidence="1" type="primary">gcvT</name>
    <name type="synonym">gcvT-1</name>
    <name type="ordered locus">PSPTO_0316</name>
</gene>
<reference key="1">
    <citation type="journal article" date="2003" name="Proc. Natl. Acad. Sci. U.S.A.">
        <title>The complete genome sequence of the Arabidopsis and tomato pathogen Pseudomonas syringae pv. tomato DC3000.</title>
        <authorList>
            <person name="Buell C.R."/>
            <person name="Joardar V."/>
            <person name="Lindeberg M."/>
            <person name="Selengut J."/>
            <person name="Paulsen I.T."/>
            <person name="Gwinn M.L."/>
            <person name="Dodson R.J."/>
            <person name="DeBoy R.T."/>
            <person name="Durkin A.S."/>
            <person name="Kolonay J.F."/>
            <person name="Madupu R."/>
            <person name="Daugherty S.C."/>
            <person name="Brinkac L.M."/>
            <person name="Beanan M.J."/>
            <person name="Haft D.H."/>
            <person name="Nelson W.C."/>
            <person name="Davidsen T.M."/>
            <person name="Zafar N."/>
            <person name="Zhou L."/>
            <person name="Liu J."/>
            <person name="Yuan Q."/>
            <person name="Khouri H.M."/>
            <person name="Fedorova N.B."/>
            <person name="Tran B."/>
            <person name="Russell D."/>
            <person name="Berry K.J."/>
            <person name="Utterback T.R."/>
            <person name="Van Aken S.E."/>
            <person name="Feldblyum T.V."/>
            <person name="D'Ascenzo M."/>
            <person name="Deng W.-L."/>
            <person name="Ramos A.R."/>
            <person name="Alfano J.R."/>
            <person name="Cartinhour S."/>
            <person name="Chatterjee A.K."/>
            <person name="Delaney T.P."/>
            <person name="Lazarowitz S.G."/>
            <person name="Martin G.B."/>
            <person name="Schneider D.J."/>
            <person name="Tang X."/>
            <person name="Bender C.L."/>
            <person name="White O."/>
            <person name="Fraser C.M."/>
            <person name="Collmer A."/>
        </authorList>
    </citation>
    <scope>NUCLEOTIDE SEQUENCE [LARGE SCALE GENOMIC DNA]</scope>
    <source>
        <strain>ATCC BAA-871 / DC3000</strain>
    </source>
</reference>
<keyword id="KW-0032">Aminotransferase</keyword>
<keyword id="KW-1185">Reference proteome</keyword>
<keyword id="KW-0808">Transferase</keyword>
<dbReference type="EC" id="2.1.2.10" evidence="1"/>
<dbReference type="EMBL" id="AE016853">
    <property type="protein sequence ID" value="AAO53861.1"/>
    <property type="molecule type" value="Genomic_DNA"/>
</dbReference>
<dbReference type="RefSeq" id="NP_790166.1">
    <property type="nucleotide sequence ID" value="NC_004578.1"/>
</dbReference>
<dbReference type="RefSeq" id="WP_005763440.1">
    <property type="nucleotide sequence ID" value="NC_004578.1"/>
</dbReference>
<dbReference type="SMR" id="Q88AS0"/>
<dbReference type="STRING" id="223283.PSPTO_0316"/>
<dbReference type="GeneID" id="1181925"/>
<dbReference type="KEGG" id="pst:PSPTO_0316"/>
<dbReference type="PATRIC" id="fig|223283.9.peg.329"/>
<dbReference type="eggNOG" id="COG0404">
    <property type="taxonomic scope" value="Bacteria"/>
</dbReference>
<dbReference type="HOGENOM" id="CLU_007884_10_2_6"/>
<dbReference type="OrthoDB" id="9774591at2"/>
<dbReference type="PhylomeDB" id="Q88AS0"/>
<dbReference type="Proteomes" id="UP000002515">
    <property type="component" value="Chromosome"/>
</dbReference>
<dbReference type="GO" id="GO:0005829">
    <property type="term" value="C:cytosol"/>
    <property type="evidence" value="ECO:0007669"/>
    <property type="project" value="TreeGrafter"/>
</dbReference>
<dbReference type="GO" id="GO:0005960">
    <property type="term" value="C:glycine cleavage complex"/>
    <property type="evidence" value="ECO:0007669"/>
    <property type="project" value="InterPro"/>
</dbReference>
<dbReference type="GO" id="GO:0004047">
    <property type="term" value="F:aminomethyltransferase activity"/>
    <property type="evidence" value="ECO:0007669"/>
    <property type="project" value="UniProtKB-UniRule"/>
</dbReference>
<dbReference type="GO" id="GO:0008483">
    <property type="term" value="F:transaminase activity"/>
    <property type="evidence" value="ECO:0007669"/>
    <property type="project" value="UniProtKB-KW"/>
</dbReference>
<dbReference type="GO" id="GO:0019464">
    <property type="term" value="P:glycine decarboxylation via glycine cleavage system"/>
    <property type="evidence" value="ECO:0007669"/>
    <property type="project" value="UniProtKB-UniRule"/>
</dbReference>
<dbReference type="FunFam" id="2.40.30.110:FF:000001">
    <property type="entry name" value="Aminomethyltransferase"/>
    <property type="match status" value="1"/>
</dbReference>
<dbReference type="FunFam" id="3.30.70.1400:FF:000001">
    <property type="entry name" value="Aminomethyltransferase"/>
    <property type="match status" value="1"/>
</dbReference>
<dbReference type="FunFam" id="4.10.1250.10:FF:000001">
    <property type="entry name" value="Aminomethyltransferase"/>
    <property type="match status" value="1"/>
</dbReference>
<dbReference type="Gene3D" id="2.40.30.110">
    <property type="entry name" value="Aminomethyltransferase beta-barrel domains"/>
    <property type="match status" value="1"/>
</dbReference>
<dbReference type="Gene3D" id="3.30.70.1400">
    <property type="entry name" value="Aminomethyltransferase beta-barrel domains"/>
    <property type="match status" value="1"/>
</dbReference>
<dbReference type="Gene3D" id="4.10.1250.10">
    <property type="entry name" value="Aminomethyltransferase fragment"/>
    <property type="match status" value="1"/>
</dbReference>
<dbReference type="Gene3D" id="3.30.1360.120">
    <property type="entry name" value="Probable tRNA modification gtpase trme, domain 1"/>
    <property type="match status" value="1"/>
</dbReference>
<dbReference type="HAMAP" id="MF_00259">
    <property type="entry name" value="GcvT"/>
    <property type="match status" value="1"/>
</dbReference>
<dbReference type="InterPro" id="IPR006223">
    <property type="entry name" value="GCS_T"/>
</dbReference>
<dbReference type="InterPro" id="IPR022903">
    <property type="entry name" value="GCS_T_bac"/>
</dbReference>
<dbReference type="InterPro" id="IPR013977">
    <property type="entry name" value="GCST_C"/>
</dbReference>
<dbReference type="InterPro" id="IPR006222">
    <property type="entry name" value="GCV_T_N"/>
</dbReference>
<dbReference type="InterPro" id="IPR028896">
    <property type="entry name" value="GcvT/YgfZ/DmdA"/>
</dbReference>
<dbReference type="InterPro" id="IPR029043">
    <property type="entry name" value="GcvT/YgfZ_C"/>
</dbReference>
<dbReference type="InterPro" id="IPR027266">
    <property type="entry name" value="TrmE/GcvT_dom1"/>
</dbReference>
<dbReference type="NCBIfam" id="TIGR00528">
    <property type="entry name" value="gcvT"/>
    <property type="match status" value="1"/>
</dbReference>
<dbReference type="NCBIfam" id="NF001567">
    <property type="entry name" value="PRK00389.1"/>
    <property type="match status" value="1"/>
</dbReference>
<dbReference type="PANTHER" id="PTHR43757">
    <property type="entry name" value="AMINOMETHYLTRANSFERASE"/>
    <property type="match status" value="1"/>
</dbReference>
<dbReference type="PANTHER" id="PTHR43757:SF2">
    <property type="entry name" value="AMINOMETHYLTRANSFERASE, MITOCHONDRIAL"/>
    <property type="match status" value="1"/>
</dbReference>
<dbReference type="Pfam" id="PF01571">
    <property type="entry name" value="GCV_T"/>
    <property type="match status" value="1"/>
</dbReference>
<dbReference type="Pfam" id="PF08669">
    <property type="entry name" value="GCV_T_C"/>
    <property type="match status" value="1"/>
</dbReference>
<dbReference type="PIRSF" id="PIRSF006487">
    <property type="entry name" value="GcvT"/>
    <property type="match status" value="1"/>
</dbReference>
<dbReference type="SUPFAM" id="SSF101790">
    <property type="entry name" value="Aminomethyltransferase beta-barrel domain"/>
    <property type="match status" value="1"/>
</dbReference>
<dbReference type="SUPFAM" id="SSF103025">
    <property type="entry name" value="Folate-binding domain"/>
    <property type="match status" value="1"/>
</dbReference>
<organism>
    <name type="scientific">Pseudomonas syringae pv. tomato (strain ATCC BAA-871 / DC3000)</name>
    <dbReference type="NCBI Taxonomy" id="223283"/>
    <lineage>
        <taxon>Bacteria</taxon>
        <taxon>Pseudomonadati</taxon>
        <taxon>Pseudomonadota</taxon>
        <taxon>Gammaproteobacteria</taxon>
        <taxon>Pseudomonadales</taxon>
        <taxon>Pseudomonadaceae</taxon>
        <taxon>Pseudomonas</taxon>
    </lineage>
</organism>
<name>GCST_PSESM</name>
<feature type="chain" id="PRO_0000122588" description="Aminomethyltransferase">
    <location>
        <begin position="1"/>
        <end position="360"/>
    </location>
</feature>
<proteinExistence type="inferred from homology"/>
<evidence type="ECO:0000255" key="1">
    <source>
        <dbReference type="HAMAP-Rule" id="MF_00259"/>
    </source>
</evidence>
<comment type="function">
    <text evidence="1">The glycine cleavage system catalyzes the degradation of glycine.</text>
</comment>
<comment type="catalytic activity">
    <reaction evidence="1">
        <text>N(6)-[(R)-S(8)-aminomethyldihydrolipoyl]-L-lysyl-[protein] + (6S)-5,6,7,8-tetrahydrofolate = N(6)-[(R)-dihydrolipoyl]-L-lysyl-[protein] + (6R)-5,10-methylene-5,6,7,8-tetrahydrofolate + NH4(+)</text>
        <dbReference type="Rhea" id="RHEA:16945"/>
        <dbReference type="Rhea" id="RHEA-COMP:10475"/>
        <dbReference type="Rhea" id="RHEA-COMP:10492"/>
        <dbReference type="ChEBI" id="CHEBI:15636"/>
        <dbReference type="ChEBI" id="CHEBI:28938"/>
        <dbReference type="ChEBI" id="CHEBI:57453"/>
        <dbReference type="ChEBI" id="CHEBI:83100"/>
        <dbReference type="ChEBI" id="CHEBI:83143"/>
        <dbReference type="EC" id="2.1.2.10"/>
    </reaction>
</comment>
<comment type="subunit">
    <text evidence="1">The glycine cleavage system is composed of four proteins: P, T, L and H.</text>
</comment>
<comment type="similarity">
    <text evidence="1">Belongs to the GcvT family.</text>
</comment>
<accession>Q88AS0</accession>
<protein>
    <recommendedName>
        <fullName evidence="1">Aminomethyltransferase</fullName>
        <ecNumber evidence="1">2.1.2.10</ecNumber>
    </recommendedName>
    <alternativeName>
        <fullName evidence="1">Glycine cleavage system T protein</fullName>
    </alternativeName>
</protein>
<sequence length="360" mass="39665">MGQRTPLFDLHLALGAKMVDFGGWDMPLHYGSQVEEHHQVRRDCGVFDVSHMNVIDVLGREAKAWLRRLLANDVDKLKTPGRALYSAMLDEQAGVIDDMIVYLTADGYRLVVNAATGAKDLAWMQSQLGDFDVQLLARSEMAMLAIQGPQARNRIAQLVSSARAELIRQLKPFEGLDDGDWFIARTGYTGEDGLEIMLPADEAQRFFNELVGAGISPIGLGARDTLRLEAGMNLYGQDIGEHVSPLASNMAWSIAWEPAERDFIGRQALESERAEGTAFKLVGLVLEERGVLRAHQVVRVAEIGEGEITSGSFSPTLSKSIALARVPMATADRAEVEIRGKWYPVRVVQPAFVRHGKTLI</sequence>